<gene>
    <name type="primary">xerC1</name>
    <name type="ordered locus">RSc0052</name>
    <name type="ORF">RS01875</name>
</gene>
<dbReference type="EMBL" id="AL646052">
    <property type="protein sequence ID" value="CAD13580.1"/>
    <property type="molecule type" value="Genomic_DNA"/>
</dbReference>
<dbReference type="SMR" id="Q8Y3C8"/>
<dbReference type="STRING" id="267608.RSc0052"/>
<dbReference type="EnsemblBacteria" id="CAD13580">
    <property type="protein sequence ID" value="CAD13580"/>
    <property type="gene ID" value="RSc0052"/>
</dbReference>
<dbReference type="KEGG" id="rso:RSc0052"/>
<dbReference type="eggNOG" id="COG4973">
    <property type="taxonomic scope" value="Bacteria"/>
</dbReference>
<dbReference type="HOGENOM" id="CLU_027562_9_0_4"/>
<dbReference type="Proteomes" id="UP000001436">
    <property type="component" value="Chromosome"/>
</dbReference>
<dbReference type="GO" id="GO:0005737">
    <property type="term" value="C:cytoplasm"/>
    <property type="evidence" value="ECO:0007669"/>
    <property type="project" value="UniProtKB-SubCell"/>
</dbReference>
<dbReference type="GO" id="GO:0003677">
    <property type="term" value="F:DNA binding"/>
    <property type="evidence" value="ECO:0007669"/>
    <property type="project" value="UniProtKB-KW"/>
</dbReference>
<dbReference type="GO" id="GO:0009037">
    <property type="term" value="F:tyrosine-based site-specific recombinase activity"/>
    <property type="evidence" value="ECO:0007669"/>
    <property type="project" value="UniProtKB-UniRule"/>
</dbReference>
<dbReference type="GO" id="GO:0051301">
    <property type="term" value="P:cell division"/>
    <property type="evidence" value="ECO:0007669"/>
    <property type="project" value="UniProtKB-KW"/>
</dbReference>
<dbReference type="GO" id="GO:0007059">
    <property type="term" value="P:chromosome segregation"/>
    <property type="evidence" value="ECO:0007669"/>
    <property type="project" value="UniProtKB-UniRule"/>
</dbReference>
<dbReference type="GO" id="GO:0006313">
    <property type="term" value="P:DNA transposition"/>
    <property type="evidence" value="ECO:0007669"/>
    <property type="project" value="UniProtKB-UniRule"/>
</dbReference>
<dbReference type="CDD" id="cd00798">
    <property type="entry name" value="INT_XerDC_C"/>
    <property type="match status" value="1"/>
</dbReference>
<dbReference type="Gene3D" id="1.10.150.130">
    <property type="match status" value="1"/>
</dbReference>
<dbReference type="Gene3D" id="1.10.443.10">
    <property type="entry name" value="Intergrase catalytic core"/>
    <property type="match status" value="1"/>
</dbReference>
<dbReference type="HAMAP" id="MF_01808">
    <property type="entry name" value="Recomb_XerC_XerD"/>
    <property type="match status" value="1"/>
</dbReference>
<dbReference type="InterPro" id="IPR044068">
    <property type="entry name" value="CB"/>
</dbReference>
<dbReference type="InterPro" id="IPR011010">
    <property type="entry name" value="DNA_brk_join_enz"/>
</dbReference>
<dbReference type="InterPro" id="IPR013762">
    <property type="entry name" value="Integrase-like_cat_sf"/>
</dbReference>
<dbReference type="InterPro" id="IPR002104">
    <property type="entry name" value="Integrase_catalytic"/>
</dbReference>
<dbReference type="InterPro" id="IPR010998">
    <property type="entry name" value="Integrase_recombinase_N"/>
</dbReference>
<dbReference type="InterPro" id="IPR004107">
    <property type="entry name" value="Integrase_SAM-like_N"/>
</dbReference>
<dbReference type="InterPro" id="IPR011931">
    <property type="entry name" value="Recomb_XerC"/>
</dbReference>
<dbReference type="InterPro" id="IPR023009">
    <property type="entry name" value="Tyrosine_recombinase_XerC/XerD"/>
</dbReference>
<dbReference type="InterPro" id="IPR050090">
    <property type="entry name" value="Tyrosine_recombinase_XerCD"/>
</dbReference>
<dbReference type="NCBIfam" id="NF001399">
    <property type="entry name" value="PRK00283.1"/>
    <property type="match status" value="1"/>
</dbReference>
<dbReference type="NCBIfam" id="TIGR02224">
    <property type="entry name" value="recomb_XerC"/>
    <property type="match status" value="1"/>
</dbReference>
<dbReference type="PANTHER" id="PTHR30349">
    <property type="entry name" value="PHAGE INTEGRASE-RELATED"/>
    <property type="match status" value="1"/>
</dbReference>
<dbReference type="PANTHER" id="PTHR30349:SF81">
    <property type="entry name" value="TYROSINE RECOMBINASE XERC"/>
    <property type="match status" value="1"/>
</dbReference>
<dbReference type="Pfam" id="PF02899">
    <property type="entry name" value="Phage_int_SAM_1"/>
    <property type="match status" value="1"/>
</dbReference>
<dbReference type="Pfam" id="PF00589">
    <property type="entry name" value="Phage_integrase"/>
    <property type="match status" value="1"/>
</dbReference>
<dbReference type="SUPFAM" id="SSF56349">
    <property type="entry name" value="DNA breaking-rejoining enzymes"/>
    <property type="match status" value="1"/>
</dbReference>
<dbReference type="SUPFAM" id="SSF47823">
    <property type="entry name" value="lambda integrase-like, N-terminal domain"/>
    <property type="match status" value="1"/>
</dbReference>
<dbReference type="PROSITE" id="PS51900">
    <property type="entry name" value="CB"/>
    <property type="match status" value="1"/>
</dbReference>
<dbReference type="PROSITE" id="PS51898">
    <property type="entry name" value="TYR_RECOMBINASE"/>
    <property type="match status" value="1"/>
</dbReference>
<keyword id="KW-0131">Cell cycle</keyword>
<keyword id="KW-0132">Cell division</keyword>
<keyword id="KW-0159">Chromosome partition</keyword>
<keyword id="KW-0963">Cytoplasm</keyword>
<keyword id="KW-0229">DNA integration</keyword>
<keyword id="KW-0233">DNA recombination</keyword>
<keyword id="KW-0238">DNA-binding</keyword>
<keyword id="KW-1185">Reference proteome</keyword>
<accession>Q8Y3C8</accession>
<protein>
    <recommendedName>
        <fullName>Tyrosine recombinase XerC 1</fullName>
    </recommendedName>
</protein>
<comment type="function">
    <text evidence="1">Site-specific tyrosine recombinase, which acts by catalyzing the cutting and rejoining of the recombining DNA molecules. The XerC-XerD complex is essential to convert dimers of the bacterial chromosome into monomers to permit their segregation at cell division. It also contributes to the segregational stability of plasmids (By similarity).</text>
</comment>
<comment type="subunit">
    <text evidence="1">Forms a cyclic heterotetrameric complex composed of two molecules of XerC and two molecules of XerD.</text>
</comment>
<comment type="subcellular location">
    <subcellularLocation>
        <location evidence="1">Cytoplasm</location>
    </subcellularLocation>
</comment>
<comment type="similarity">
    <text evidence="4">Belongs to the 'phage' integrase family. XerC subfamily.</text>
</comment>
<organism>
    <name type="scientific">Ralstonia nicotianae (strain ATCC BAA-1114 / GMI1000)</name>
    <name type="common">Ralstonia solanacearum</name>
    <dbReference type="NCBI Taxonomy" id="267608"/>
    <lineage>
        <taxon>Bacteria</taxon>
        <taxon>Pseudomonadati</taxon>
        <taxon>Pseudomonadota</taxon>
        <taxon>Betaproteobacteria</taxon>
        <taxon>Burkholderiales</taxon>
        <taxon>Burkholderiaceae</taxon>
        <taxon>Ralstonia</taxon>
        <taxon>Ralstonia solanacearum species complex</taxon>
    </lineage>
</organism>
<evidence type="ECO:0000250" key="1"/>
<evidence type="ECO:0000255" key="2">
    <source>
        <dbReference type="PROSITE-ProRule" id="PRU01246"/>
    </source>
</evidence>
<evidence type="ECO:0000255" key="3">
    <source>
        <dbReference type="PROSITE-ProRule" id="PRU01248"/>
    </source>
</evidence>
<evidence type="ECO:0000305" key="4"/>
<reference key="1">
    <citation type="journal article" date="2002" name="Nature">
        <title>Genome sequence of the plant pathogen Ralstonia solanacearum.</title>
        <authorList>
            <person name="Salanoubat M."/>
            <person name="Genin S."/>
            <person name="Artiguenave F."/>
            <person name="Gouzy J."/>
            <person name="Mangenot S."/>
            <person name="Arlat M."/>
            <person name="Billault A."/>
            <person name="Brottier P."/>
            <person name="Camus J.-C."/>
            <person name="Cattolico L."/>
            <person name="Chandler M."/>
            <person name="Choisne N."/>
            <person name="Claudel-Renard C."/>
            <person name="Cunnac S."/>
            <person name="Demange N."/>
            <person name="Gaspin C."/>
            <person name="Lavie M."/>
            <person name="Moisan A."/>
            <person name="Robert C."/>
            <person name="Saurin W."/>
            <person name="Schiex T."/>
            <person name="Siguier P."/>
            <person name="Thebault P."/>
            <person name="Whalen M."/>
            <person name="Wincker P."/>
            <person name="Levy M."/>
            <person name="Weissenbach J."/>
            <person name="Boucher C.A."/>
        </authorList>
    </citation>
    <scope>NUCLEOTIDE SEQUENCE [LARGE SCALE GENOMIC DNA]</scope>
    <source>
        <strain>ATCC BAA-1114 / GMI1000</strain>
    </source>
</reference>
<sequence length="329" mass="36008">MPPSAPDDDRDAPAPPHPQIGAYLDALKFERKLSQHTLASYARELAVLQQLGARFAAGIDLMRLQPHHIRRMMAQLHGGGLSGRSIARALSAWRGWYQWLALRDAAVTANPVDGIRAPKSPKRLPKALSVEQAVALMEQLPGDDPEAVRDRAVNELFYSCGLRLSELVGLDLRHAQAGDYASASWLDLEAREVTVLGKGNKRRTVPVGSKAAEALAAWLAVRPQLAQPDAAPEDAHALFLSARGKRLAQRQIQTRMKRNAIAAGVPADVHPHVLRHSFATHMLQSSGDLRAVQELLGHASIASTQVYTSLDFQHLAKIYDQAHPRAKKK</sequence>
<feature type="chain" id="PRO_0000095318" description="Tyrosine recombinase XerC 1">
    <location>
        <begin position="1"/>
        <end position="329"/>
    </location>
</feature>
<feature type="domain" description="Core-binding (CB)" evidence="3">
    <location>
        <begin position="14"/>
        <end position="101"/>
    </location>
</feature>
<feature type="domain" description="Tyr recombinase" evidence="2">
    <location>
        <begin position="123"/>
        <end position="320"/>
    </location>
</feature>
<feature type="active site" evidence="1">
    <location>
        <position position="163"/>
    </location>
</feature>
<feature type="active site" evidence="1">
    <location>
        <position position="198"/>
    </location>
</feature>
<feature type="active site" evidence="1">
    <location>
        <position position="272"/>
    </location>
</feature>
<feature type="active site" evidence="1">
    <location>
        <position position="275"/>
    </location>
</feature>
<feature type="active site" evidence="1">
    <location>
        <position position="298"/>
    </location>
</feature>
<feature type="active site" description="O-(3'-phospho-DNA)-tyrosine intermediate" evidence="1">
    <location>
        <position position="307"/>
    </location>
</feature>
<proteinExistence type="inferred from homology"/>
<name>XERC1_RALN1</name>